<dbReference type="EMBL" id="AY532620">
    <property type="protein sequence ID" value="AAS46037.1"/>
    <property type="molecule type" value="Genomic_DNA"/>
</dbReference>
<dbReference type="SMR" id="Q6QNF8"/>
<dbReference type="GO" id="GO:0005938">
    <property type="term" value="C:cell cortex"/>
    <property type="evidence" value="ECO:0007669"/>
    <property type="project" value="TreeGrafter"/>
</dbReference>
<dbReference type="GO" id="GO:0005856">
    <property type="term" value="C:cytoskeleton"/>
    <property type="evidence" value="ECO:0007669"/>
    <property type="project" value="UniProtKB-SubCell"/>
</dbReference>
<dbReference type="GO" id="GO:0003785">
    <property type="term" value="F:actin monomer binding"/>
    <property type="evidence" value="ECO:0007669"/>
    <property type="project" value="TreeGrafter"/>
</dbReference>
<dbReference type="Gene3D" id="3.30.450.30">
    <property type="entry name" value="Dynein light chain 2a, cytoplasmic"/>
    <property type="match status" value="1"/>
</dbReference>
<dbReference type="InterPro" id="IPR048278">
    <property type="entry name" value="PFN"/>
</dbReference>
<dbReference type="InterPro" id="IPR005455">
    <property type="entry name" value="PFN_euk"/>
</dbReference>
<dbReference type="InterPro" id="IPR036140">
    <property type="entry name" value="PFN_sf"/>
</dbReference>
<dbReference type="PANTHER" id="PTHR11604">
    <property type="entry name" value="PROFILIN"/>
    <property type="match status" value="1"/>
</dbReference>
<dbReference type="PANTHER" id="PTHR11604:SF0">
    <property type="entry name" value="PROFILIN"/>
    <property type="match status" value="1"/>
</dbReference>
<dbReference type="Pfam" id="PF00235">
    <property type="entry name" value="Profilin"/>
    <property type="match status" value="1"/>
</dbReference>
<dbReference type="PRINTS" id="PR00392">
    <property type="entry name" value="PROFILIN"/>
</dbReference>
<dbReference type="SMART" id="SM00392">
    <property type="entry name" value="PROF"/>
    <property type="match status" value="1"/>
</dbReference>
<dbReference type="SUPFAM" id="SSF55770">
    <property type="entry name" value="Profilin (actin-binding protein)"/>
    <property type="match status" value="1"/>
</dbReference>
<proteinExistence type="inferred from homology"/>
<name>PROF_NAEPR</name>
<sequence>MSWTPFVDSQFVAPSNGLIQKGLIMGRDGTVWGVSDGWAVTAQEAKNLAGQVANPSSVPASGITLGGVKYMGLVADEENFQGFSSSKKQGVSGVVLKSAVIIGLFGEPHKNPNAYSFLKGVADSLVNAGTLQ</sequence>
<organism>
    <name type="scientific">Naegleria pringsheimi</name>
    <name type="common">Amoeba</name>
    <dbReference type="NCBI Taxonomy" id="234921"/>
    <lineage>
        <taxon>Eukaryota</taxon>
        <taxon>Discoba</taxon>
        <taxon>Heterolobosea</taxon>
        <taxon>Tetramitia</taxon>
        <taxon>Eutetramitia</taxon>
        <taxon>Vahlkampfiidae</taxon>
        <taxon>Naegleria</taxon>
    </lineage>
</organism>
<reference key="1">
    <citation type="submission" date="2004-01" db="EMBL/GenBank/DDBJ databases">
        <authorList>
            <person name="Kang S.M."/>
            <person name="Yang H.J."/>
            <person name="Lee J.H."/>
        </authorList>
    </citation>
    <scope>NUCLEOTIDE SEQUENCE [GENOMIC DNA]</scope>
    <source>
        <strain>ATCC 30961 / NB-1</strain>
    </source>
</reference>
<comment type="function">
    <text evidence="1">Binds to actin and affects the structure of the cytoskeleton. At high concentrations, profilin prevents the polymerization of actin, whereas it enhances it at low concentrations. By binding to PIP2, it inhibits the formation of IP3 and DG (By similarity).</text>
</comment>
<comment type="subunit">
    <text evidence="1">Occurs in many kinds of cells as a complex with monomeric actin in a 1:1 ratio.</text>
</comment>
<comment type="subcellular location">
    <subcellularLocation>
        <location evidence="1">Cytoplasm</location>
        <location evidence="1">Cytoskeleton</location>
    </subcellularLocation>
</comment>
<comment type="similarity">
    <text evidence="2">Belongs to the profilin family.</text>
</comment>
<protein>
    <recommendedName>
        <fullName>Profilin</fullName>
    </recommendedName>
</protein>
<feature type="chain" id="PRO_0000199599" description="Profilin">
    <location>
        <begin position="1"/>
        <end position="132"/>
    </location>
</feature>
<keyword id="KW-0009">Actin-binding</keyword>
<keyword id="KW-0963">Cytoplasm</keyword>
<keyword id="KW-0206">Cytoskeleton</keyword>
<evidence type="ECO:0000250" key="1"/>
<evidence type="ECO:0000305" key="2"/>
<accession>Q6QNF8</accession>